<organism>
    <name type="scientific">Blochmanniella floridana</name>
    <dbReference type="NCBI Taxonomy" id="203907"/>
    <lineage>
        <taxon>Bacteria</taxon>
        <taxon>Pseudomonadati</taxon>
        <taxon>Pseudomonadota</taxon>
        <taxon>Gammaproteobacteria</taxon>
        <taxon>Enterobacterales</taxon>
        <taxon>Enterobacteriaceae</taxon>
        <taxon>ant endosymbionts</taxon>
        <taxon>Candidatus Blochmanniella</taxon>
    </lineage>
</organism>
<accession>Q7VQJ6</accession>
<protein>
    <recommendedName>
        <fullName evidence="1">2-isopropylmalate synthase</fullName>
        <ecNumber evidence="1">2.3.3.13</ecNumber>
    </recommendedName>
    <alternativeName>
        <fullName evidence="1">Alpha-IPM synthase</fullName>
    </alternativeName>
    <alternativeName>
        <fullName evidence="1">Alpha-isopropylmalate synthase</fullName>
    </alternativeName>
</protein>
<dbReference type="EC" id="2.3.3.13" evidence="1"/>
<dbReference type="EMBL" id="BX248583">
    <property type="protein sequence ID" value="CAD83654.1"/>
    <property type="molecule type" value="Genomic_DNA"/>
</dbReference>
<dbReference type="SMR" id="Q7VQJ6"/>
<dbReference type="STRING" id="203907.Bfl133"/>
<dbReference type="KEGG" id="bfl:Bfl133"/>
<dbReference type="eggNOG" id="COG0119">
    <property type="taxonomic scope" value="Bacteria"/>
</dbReference>
<dbReference type="HOGENOM" id="CLU_022158_0_1_6"/>
<dbReference type="OrthoDB" id="9803573at2"/>
<dbReference type="UniPathway" id="UPA00048">
    <property type="reaction ID" value="UER00070"/>
</dbReference>
<dbReference type="Proteomes" id="UP000002192">
    <property type="component" value="Chromosome"/>
</dbReference>
<dbReference type="GO" id="GO:0005829">
    <property type="term" value="C:cytosol"/>
    <property type="evidence" value="ECO:0007669"/>
    <property type="project" value="TreeGrafter"/>
</dbReference>
<dbReference type="GO" id="GO:0003852">
    <property type="term" value="F:2-isopropylmalate synthase activity"/>
    <property type="evidence" value="ECO:0007669"/>
    <property type="project" value="UniProtKB-UniRule"/>
</dbReference>
<dbReference type="GO" id="GO:0003985">
    <property type="term" value="F:acetyl-CoA C-acetyltransferase activity"/>
    <property type="evidence" value="ECO:0007669"/>
    <property type="project" value="UniProtKB-UniRule"/>
</dbReference>
<dbReference type="GO" id="GO:0030145">
    <property type="term" value="F:manganese ion binding"/>
    <property type="evidence" value="ECO:0007669"/>
    <property type="project" value="UniProtKB-UniRule"/>
</dbReference>
<dbReference type="GO" id="GO:0009098">
    <property type="term" value="P:L-leucine biosynthetic process"/>
    <property type="evidence" value="ECO:0007669"/>
    <property type="project" value="UniProtKB-UniRule"/>
</dbReference>
<dbReference type="CDD" id="cd07940">
    <property type="entry name" value="DRE_TIM_IPMS"/>
    <property type="match status" value="1"/>
</dbReference>
<dbReference type="FunFam" id="1.10.238.260:FF:000001">
    <property type="entry name" value="2-isopropylmalate synthase"/>
    <property type="match status" value="1"/>
</dbReference>
<dbReference type="FunFam" id="3.20.20.70:FF:000010">
    <property type="entry name" value="2-isopropylmalate synthase"/>
    <property type="match status" value="1"/>
</dbReference>
<dbReference type="Gene3D" id="1.10.238.260">
    <property type="match status" value="1"/>
</dbReference>
<dbReference type="Gene3D" id="3.30.160.270">
    <property type="match status" value="1"/>
</dbReference>
<dbReference type="Gene3D" id="3.20.20.70">
    <property type="entry name" value="Aldolase class I"/>
    <property type="match status" value="1"/>
</dbReference>
<dbReference type="HAMAP" id="MF_01025">
    <property type="entry name" value="LeuA_type1"/>
    <property type="match status" value="1"/>
</dbReference>
<dbReference type="InterPro" id="IPR050073">
    <property type="entry name" value="2-IPM_HCS-like"/>
</dbReference>
<dbReference type="InterPro" id="IPR013709">
    <property type="entry name" value="2-isopropylmalate_synth_dimer"/>
</dbReference>
<dbReference type="InterPro" id="IPR002034">
    <property type="entry name" value="AIPM/Hcit_synth_CS"/>
</dbReference>
<dbReference type="InterPro" id="IPR013785">
    <property type="entry name" value="Aldolase_TIM"/>
</dbReference>
<dbReference type="InterPro" id="IPR054691">
    <property type="entry name" value="LeuA/HCS_post-cat"/>
</dbReference>
<dbReference type="InterPro" id="IPR036230">
    <property type="entry name" value="LeuA_allosteric_dom_sf"/>
</dbReference>
<dbReference type="InterPro" id="IPR005671">
    <property type="entry name" value="LeuA_bact_synth"/>
</dbReference>
<dbReference type="InterPro" id="IPR000891">
    <property type="entry name" value="PYR_CT"/>
</dbReference>
<dbReference type="NCBIfam" id="TIGR00973">
    <property type="entry name" value="leuA_bact"/>
    <property type="match status" value="1"/>
</dbReference>
<dbReference type="NCBIfam" id="NF002084">
    <property type="entry name" value="PRK00915.1-1"/>
    <property type="match status" value="1"/>
</dbReference>
<dbReference type="NCBIfam" id="NF002086">
    <property type="entry name" value="PRK00915.1-3"/>
    <property type="match status" value="1"/>
</dbReference>
<dbReference type="PANTHER" id="PTHR10277:SF9">
    <property type="entry name" value="2-ISOPROPYLMALATE SYNTHASE 1, CHLOROPLASTIC-RELATED"/>
    <property type="match status" value="1"/>
</dbReference>
<dbReference type="PANTHER" id="PTHR10277">
    <property type="entry name" value="HOMOCITRATE SYNTHASE-RELATED"/>
    <property type="match status" value="1"/>
</dbReference>
<dbReference type="Pfam" id="PF22617">
    <property type="entry name" value="HCS_D2"/>
    <property type="match status" value="1"/>
</dbReference>
<dbReference type="Pfam" id="PF00682">
    <property type="entry name" value="HMGL-like"/>
    <property type="match status" value="1"/>
</dbReference>
<dbReference type="Pfam" id="PF08502">
    <property type="entry name" value="LeuA_dimer"/>
    <property type="match status" value="1"/>
</dbReference>
<dbReference type="SMART" id="SM00917">
    <property type="entry name" value="LeuA_dimer"/>
    <property type="match status" value="1"/>
</dbReference>
<dbReference type="SUPFAM" id="SSF110921">
    <property type="entry name" value="2-isopropylmalate synthase LeuA, allosteric (dimerisation) domain"/>
    <property type="match status" value="1"/>
</dbReference>
<dbReference type="SUPFAM" id="SSF51569">
    <property type="entry name" value="Aldolase"/>
    <property type="match status" value="1"/>
</dbReference>
<dbReference type="PROSITE" id="PS00815">
    <property type="entry name" value="AIPM_HOMOCIT_SYNTH_1"/>
    <property type="match status" value="1"/>
</dbReference>
<dbReference type="PROSITE" id="PS00816">
    <property type="entry name" value="AIPM_HOMOCIT_SYNTH_2"/>
    <property type="match status" value="1"/>
</dbReference>
<dbReference type="PROSITE" id="PS50991">
    <property type="entry name" value="PYR_CT"/>
    <property type="match status" value="1"/>
</dbReference>
<proteinExistence type="inferred from homology"/>
<evidence type="ECO:0000255" key="1">
    <source>
        <dbReference type="HAMAP-Rule" id="MF_01025"/>
    </source>
</evidence>
<comment type="function">
    <text evidence="1">Catalyzes the condensation of the acetyl group of acetyl-CoA with 3-methyl-2-oxobutanoate (2-ketoisovalerate) to form 3-carboxy-3-hydroxy-4-methylpentanoate (2-isopropylmalate).</text>
</comment>
<comment type="catalytic activity">
    <reaction evidence="1">
        <text>3-methyl-2-oxobutanoate + acetyl-CoA + H2O = (2S)-2-isopropylmalate + CoA + H(+)</text>
        <dbReference type="Rhea" id="RHEA:21524"/>
        <dbReference type="ChEBI" id="CHEBI:1178"/>
        <dbReference type="ChEBI" id="CHEBI:11851"/>
        <dbReference type="ChEBI" id="CHEBI:15377"/>
        <dbReference type="ChEBI" id="CHEBI:15378"/>
        <dbReference type="ChEBI" id="CHEBI:57287"/>
        <dbReference type="ChEBI" id="CHEBI:57288"/>
        <dbReference type="EC" id="2.3.3.13"/>
    </reaction>
</comment>
<comment type="cofactor">
    <cofactor evidence="1">
        <name>Mn(2+)</name>
        <dbReference type="ChEBI" id="CHEBI:29035"/>
    </cofactor>
</comment>
<comment type="pathway">
    <text evidence="1">Amino-acid biosynthesis; L-leucine biosynthesis; L-leucine from 3-methyl-2-oxobutanoate: step 1/4.</text>
</comment>
<comment type="subunit">
    <text evidence="1">Homodimer.</text>
</comment>
<comment type="subcellular location">
    <subcellularLocation>
        <location evidence="1">Cytoplasm</location>
    </subcellularLocation>
</comment>
<comment type="similarity">
    <text evidence="1">Belongs to the alpha-IPM synthase/homocitrate synthase family. LeuA type 1 subfamily.</text>
</comment>
<sequence>MHQQVIIFDTTLRDGEQSLQTSLSVKEKLQIAFALEKLGVDVMEVGFPISSPGDFESVHTIAQNIQNSCVCGLARCLEKDIDIAAEALKSAKKFRIHIFLPTSAIHIQSKLRKNFDQIIDMTTHSIRYARKYTDDVEFSCEDAGRTSIDNLCRIVEIAIKSGARTINIPDTVGYTIPNQFSEIIYSLYKKVPIIDQAIISVHCHDDLGMAVGNSISAIQAGARQIEGTINGIGERAGNTALEEIIMAIKIRHDLLHVYTNIHHHEIYQTSQVVSQLCNMPIPANKAIVGSNAFSHSSGIHQDGVLKNKKNYEIMNPKNIGLKKVQLNLTSRSGRAAVKYHMEKMGYQEHDYNIDELYKVFLKLADQKGRVFNYELEALAFTKYSQEYLEYFALESFHIHSTSSALSNAIINLYCGKEKKIHSCSTTGRGPIDAAYKALTLISKLPIKLEKYQLHSKKYEYNILGQVNIIVSYQGRHFHGIGSNIDIIKASIIAMIQALNNIWQTKQITINHKNTQHIKK</sequence>
<gene>
    <name evidence="1" type="primary">leuA</name>
    <name type="ordered locus">Bfl133</name>
</gene>
<reference key="1">
    <citation type="journal article" date="2003" name="Proc. Natl. Acad. Sci. U.S.A.">
        <title>The genome sequence of Blochmannia floridanus: comparative analysis of reduced genomes.</title>
        <authorList>
            <person name="Gil R."/>
            <person name="Silva F.J."/>
            <person name="Zientz E."/>
            <person name="Delmotte F."/>
            <person name="Gonzalez-Candelas F."/>
            <person name="Latorre A."/>
            <person name="Rausell C."/>
            <person name="Kamerbeek J."/>
            <person name="Gadau J."/>
            <person name="Hoelldobler B."/>
            <person name="van Ham R.C.H.J."/>
            <person name="Gross R."/>
            <person name="Moya A."/>
        </authorList>
    </citation>
    <scope>NUCLEOTIDE SEQUENCE [LARGE SCALE GENOMIC DNA]</scope>
</reference>
<name>LEU1_BLOFL</name>
<feature type="chain" id="PRO_0000140347" description="2-isopropylmalate synthase">
    <location>
        <begin position="1"/>
        <end position="519"/>
    </location>
</feature>
<feature type="domain" description="Pyruvate carboxyltransferase" evidence="1">
    <location>
        <begin position="5"/>
        <end position="267"/>
    </location>
</feature>
<feature type="region of interest" description="Regulatory domain" evidence="1">
    <location>
        <begin position="392"/>
        <end position="519"/>
    </location>
</feature>
<feature type="binding site" evidence="1">
    <location>
        <position position="14"/>
    </location>
    <ligand>
        <name>Mn(2+)</name>
        <dbReference type="ChEBI" id="CHEBI:29035"/>
    </ligand>
</feature>
<feature type="binding site" evidence="1">
    <location>
        <position position="202"/>
    </location>
    <ligand>
        <name>Mn(2+)</name>
        <dbReference type="ChEBI" id="CHEBI:29035"/>
    </ligand>
</feature>
<feature type="binding site" evidence="1">
    <location>
        <position position="204"/>
    </location>
    <ligand>
        <name>Mn(2+)</name>
        <dbReference type="ChEBI" id="CHEBI:29035"/>
    </ligand>
</feature>
<feature type="binding site" evidence="1">
    <location>
        <position position="238"/>
    </location>
    <ligand>
        <name>Mn(2+)</name>
        <dbReference type="ChEBI" id="CHEBI:29035"/>
    </ligand>
</feature>
<keyword id="KW-0028">Amino-acid biosynthesis</keyword>
<keyword id="KW-0100">Branched-chain amino acid biosynthesis</keyword>
<keyword id="KW-0963">Cytoplasm</keyword>
<keyword id="KW-0432">Leucine biosynthesis</keyword>
<keyword id="KW-0464">Manganese</keyword>
<keyword id="KW-0479">Metal-binding</keyword>
<keyword id="KW-1185">Reference proteome</keyword>
<keyword id="KW-0808">Transferase</keyword>